<comment type="function">
    <text evidence="1">A helicase/nuclease that prepares dsDNA breaks (DSB) for recombinational DNA repair. Binds to DSBs and unwinds DNA via a highly rapid and processive ATP-dependent bidirectional helicase activity. Holoenzyme degrades any linearized DNA that is unable to undergo homologous recombination. In the holoenzyme this subunit recognizes the wild-type Chi sequence, and when added to isolated RecB increases its ATP-dependent helicase processivity. Unlike the case in E.coli, suppresses RecA-dependent homologous recombination, is instead required for single-strand annealing pathway repair of DSB.</text>
</comment>
<comment type="subunit">
    <text evidence="2">Heterotrimer of RecB, RecC and RecD. All subunits contribute to DNA-binding.</text>
</comment>
<comment type="miscellaneous">
    <text evidence="2">In the RecBCD complex, RecB has a slow 3'-5' helicase, an exonuclease activity and loads RecA onto ssDNA, RecD has a fast 5'-3' helicase activity, while RecC stimulates the ATPase and processivity of the RecB helicase and contributes to recognition of the Chi site.</text>
</comment>
<comment type="similarity">
    <text evidence="2">Belongs to the RecC family.</text>
</comment>
<accession>P9WIQ4</accession>
<accession>L0T7A5</accession>
<accession>P96921</accession>
<feature type="chain" id="PRO_0000427964" description="RecBCD enzyme subunit RecC">
    <location>
        <begin position="1"/>
        <end position="1097"/>
    </location>
</feature>
<sequence>MALHLHRAERTDLLADGLGALLADPQPDPFAQELVLVAARGVERWLSQRLSLVLGCGPGRADGVCAGIAFRNPQSLIAEITGTLDDDPWSPEALAWPLLAVIDASLDEPWCRTLASHLGHFATTDAEAELRRGRRYSVARRLAGLFASYARQRPGLLAAWLDGDLGELPGDLAWQPPLWRALVTTVGADPPHVRHDKTIARLRDGPADLPARLSLFGHTRLACTDVQLLDALAVHHDLHLWLPHPSDELWRALAGFQGADGLLPRRQDTSRRAAQHPLLETLGRDVRELQRALPAARATDEFLGATTKPDTLLGWLQADIAGNAPRPAGRSLSDADRSVQVHACHGPARQIDVLREVLLGLLEDDPTLQPRDIVVMCPDIDTYAPLIVAGFGLGEVAGDCHPAHRLRVRLADRALTQTNPLLSVAAELLTIAETRATASQLLNLAQAAPVRAKFGFADDDLDTITTWVRESNIRWGFDPTHRRRYGLDTVVHNTWRLGLDRILTGVAMSEDSQAWLDTALPLDDVGSNRVELAGRLAEFVERLHHVVGGLSGARPLVAWLDALATGIDLLTACNDGWQRAQVQREFADVLARAGSRAAPLLRLPDVRALLDAQLAGRPTRANFRTGTLTVCTMVPMRSVPHRVVCLVGLDDGVFPRLSHPDGDDVLAREPMTGERDIRSEDRQLLLDAIGAATQTLVITYTGADERTGQPRPPAVPLAELLDALDQTTSAPVRERILVTHPLQPFDRKNVTPGALLGAKPFTFDPAALAAAQAAAGKRCPPTAFISGRLPAPPAADVTLADLLDFFKDPVKGFFRALDYTLPWDVDTVEDSIPVQVDALAEWTVGERMLRDMLRGLHPDDAAHSEWRRGTLPPGRLGVRRAKEIRNRARDLAAAALAHRDGHGQAHDVDVDLGDGRRLSGTVTPVFGGRTVSVTYSKLAPKHVLPAWIGLVTLAAQEPGREWSALCIGRSKTRNHIARRLFVPPPDPVAVLRELVLLYDAGRREPLPLPLKTSCAWAQARRDGQDPYPPARECWQTNRFRPGDDDAPAHVRAWGPRAPFEVLLGKPRAGEEVAGEETRLGALAARLWLPLLAAEGSV</sequence>
<organism>
    <name type="scientific">Mycobacterium tuberculosis (strain CDC 1551 / Oshkosh)</name>
    <dbReference type="NCBI Taxonomy" id="83331"/>
    <lineage>
        <taxon>Bacteria</taxon>
        <taxon>Bacillati</taxon>
        <taxon>Actinomycetota</taxon>
        <taxon>Actinomycetes</taxon>
        <taxon>Mycobacteriales</taxon>
        <taxon>Mycobacteriaceae</taxon>
        <taxon>Mycobacterium</taxon>
        <taxon>Mycobacterium tuberculosis complex</taxon>
    </lineage>
</organism>
<reference key="1">
    <citation type="journal article" date="2002" name="J. Bacteriol.">
        <title>Whole-genome comparison of Mycobacterium tuberculosis clinical and laboratory strains.</title>
        <authorList>
            <person name="Fleischmann R.D."/>
            <person name="Alland D."/>
            <person name="Eisen J.A."/>
            <person name="Carpenter L."/>
            <person name="White O."/>
            <person name="Peterson J.D."/>
            <person name="DeBoy R.T."/>
            <person name="Dodson R.J."/>
            <person name="Gwinn M.L."/>
            <person name="Haft D.H."/>
            <person name="Hickey E.K."/>
            <person name="Kolonay J.F."/>
            <person name="Nelson W.C."/>
            <person name="Umayam L.A."/>
            <person name="Ermolaeva M.D."/>
            <person name="Salzberg S.L."/>
            <person name="Delcher A."/>
            <person name="Utterback T.R."/>
            <person name="Weidman J.F."/>
            <person name="Khouri H.M."/>
            <person name="Gill J."/>
            <person name="Mikula A."/>
            <person name="Bishai W."/>
            <person name="Jacobs W.R. Jr."/>
            <person name="Venter J.C."/>
            <person name="Fraser C.M."/>
        </authorList>
    </citation>
    <scope>NUCLEOTIDE SEQUENCE [LARGE SCALE GENOMIC DNA]</scope>
    <source>
        <strain>CDC 1551 / Oshkosh</strain>
    </source>
</reference>
<name>RECC_MYCTO</name>
<dbReference type="EMBL" id="AE000516">
    <property type="protein sequence ID" value="AAK44883.1"/>
    <property type="molecule type" value="Genomic_DNA"/>
</dbReference>
<dbReference type="PIR" id="D70612">
    <property type="entry name" value="D70612"/>
</dbReference>
<dbReference type="RefSeq" id="WP_003917323.1">
    <property type="nucleotide sequence ID" value="NZ_KK341227.1"/>
</dbReference>
<dbReference type="SMR" id="P9WIQ4"/>
<dbReference type="KEGG" id="mtc:MT0659"/>
<dbReference type="PATRIC" id="fig|83331.31.peg.699"/>
<dbReference type="HOGENOM" id="CLU_007513_1_0_11"/>
<dbReference type="Proteomes" id="UP000001020">
    <property type="component" value="Chromosome"/>
</dbReference>
<dbReference type="GO" id="GO:0009338">
    <property type="term" value="C:exodeoxyribonuclease V complex"/>
    <property type="evidence" value="ECO:0007669"/>
    <property type="project" value="InterPro"/>
</dbReference>
<dbReference type="GO" id="GO:0005524">
    <property type="term" value="F:ATP binding"/>
    <property type="evidence" value="ECO:0007669"/>
    <property type="project" value="UniProtKB-UniRule"/>
</dbReference>
<dbReference type="GO" id="GO:0003677">
    <property type="term" value="F:DNA binding"/>
    <property type="evidence" value="ECO:0007669"/>
    <property type="project" value="UniProtKB-UniRule"/>
</dbReference>
<dbReference type="GO" id="GO:0003678">
    <property type="term" value="F:DNA helicase activity"/>
    <property type="evidence" value="ECO:0007669"/>
    <property type="project" value="UniProtKB-UniRule"/>
</dbReference>
<dbReference type="GO" id="GO:0008854">
    <property type="term" value="F:exodeoxyribonuclease V activity"/>
    <property type="evidence" value="ECO:0007669"/>
    <property type="project" value="UniProtKB-EC"/>
</dbReference>
<dbReference type="GO" id="GO:0000724">
    <property type="term" value="P:double-strand break repair via homologous recombination"/>
    <property type="evidence" value="ECO:0007669"/>
    <property type="project" value="UniProtKB-UniRule"/>
</dbReference>
<dbReference type="FunFam" id="3.40.50.300:FF:003107">
    <property type="entry name" value="RecBCD enzyme subunit RecC"/>
    <property type="match status" value="1"/>
</dbReference>
<dbReference type="Gene3D" id="1.10.10.160">
    <property type="match status" value="1"/>
</dbReference>
<dbReference type="Gene3D" id="3.40.50.10930">
    <property type="match status" value="1"/>
</dbReference>
<dbReference type="Gene3D" id="3.40.50.300">
    <property type="entry name" value="P-loop containing nucleotide triphosphate hydrolases"/>
    <property type="match status" value="2"/>
</dbReference>
<dbReference type="HAMAP" id="MF_01486">
    <property type="entry name" value="RecC"/>
    <property type="match status" value="1"/>
</dbReference>
<dbReference type="InterPro" id="IPR013986">
    <property type="entry name" value="DExx_box_DNA_helicase_dom_sf"/>
</dbReference>
<dbReference type="InterPro" id="IPR027417">
    <property type="entry name" value="P-loop_NTPase"/>
</dbReference>
<dbReference type="InterPro" id="IPR006697">
    <property type="entry name" value="RecC"/>
</dbReference>
<dbReference type="InterPro" id="IPR041500">
    <property type="entry name" value="RecC_C"/>
</dbReference>
<dbReference type="InterPro" id="IPR011335">
    <property type="entry name" value="Restrct_endonuc-II-like"/>
</dbReference>
<dbReference type="NCBIfam" id="TIGR01450">
    <property type="entry name" value="recC"/>
    <property type="match status" value="1"/>
</dbReference>
<dbReference type="PANTHER" id="PTHR30591">
    <property type="entry name" value="RECBCD ENZYME SUBUNIT RECC"/>
    <property type="match status" value="1"/>
</dbReference>
<dbReference type="PANTHER" id="PTHR30591:SF1">
    <property type="entry name" value="RECBCD ENZYME SUBUNIT RECC"/>
    <property type="match status" value="1"/>
</dbReference>
<dbReference type="Pfam" id="PF04257">
    <property type="entry name" value="Exonuc_V_gamma"/>
    <property type="match status" value="1"/>
</dbReference>
<dbReference type="Pfam" id="PF17946">
    <property type="entry name" value="RecC_C"/>
    <property type="match status" value="1"/>
</dbReference>
<dbReference type="PIRSF" id="PIRSF000980">
    <property type="entry name" value="RecC"/>
    <property type="match status" value="1"/>
</dbReference>
<dbReference type="SUPFAM" id="SSF52540">
    <property type="entry name" value="P-loop containing nucleoside triphosphate hydrolases"/>
    <property type="match status" value="2"/>
</dbReference>
<dbReference type="SUPFAM" id="SSF52980">
    <property type="entry name" value="Restriction endonuclease-like"/>
    <property type="match status" value="1"/>
</dbReference>
<protein>
    <recommendedName>
        <fullName evidence="2">RecBCD enzyme subunit RecC</fullName>
    </recommendedName>
    <alternativeName>
        <fullName evidence="2">Exonuclease V subunit RecC</fullName>
        <shortName evidence="2">ExoV subunit RecC</shortName>
    </alternativeName>
    <alternativeName>
        <fullName evidence="2">Helicase/nuclease RecBCD subunit RecC</fullName>
    </alternativeName>
</protein>
<evidence type="ECO:0000250" key="1">
    <source>
        <dbReference type="UniProtKB" id="A0QS30"/>
    </source>
</evidence>
<evidence type="ECO:0000255" key="2">
    <source>
        <dbReference type="HAMAP-Rule" id="MF_01486"/>
    </source>
</evidence>
<keyword id="KW-0067">ATP-binding</keyword>
<keyword id="KW-0227">DNA damage</keyword>
<keyword id="KW-0234">DNA repair</keyword>
<keyword id="KW-0238">DNA-binding</keyword>
<keyword id="KW-0269">Exonuclease</keyword>
<keyword id="KW-0347">Helicase</keyword>
<keyword id="KW-0378">Hydrolase</keyword>
<keyword id="KW-0540">Nuclease</keyword>
<keyword id="KW-0547">Nucleotide-binding</keyword>
<keyword id="KW-1185">Reference proteome</keyword>
<proteinExistence type="inferred from homology"/>
<gene>
    <name evidence="2" type="primary">recC</name>
    <name type="ordered locus">MT0659</name>
</gene>